<dbReference type="EC" id="2.7.4.9" evidence="1"/>
<dbReference type="EMBL" id="CP000382">
    <property type="protein sequence ID" value="ABK62224.1"/>
    <property type="molecule type" value="Genomic_DNA"/>
</dbReference>
<dbReference type="RefSeq" id="WP_011723204.1">
    <property type="nucleotide sequence ID" value="NC_008593.1"/>
</dbReference>
<dbReference type="SMR" id="A0Q3M5"/>
<dbReference type="STRING" id="386415.NT01CX_0761"/>
<dbReference type="KEGG" id="cno:NT01CX_0761"/>
<dbReference type="eggNOG" id="COG0125">
    <property type="taxonomic scope" value="Bacteria"/>
</dbReference>
<dbReference type="HOGENOM" id="CLU_049131_0_2_9"/>
<dbReference type="Proteomes" id="UP000008220">
    <property type="component" value="Chromosome"/>
</dbReference>
<dbReference type="GO" id="GO:0005829">
    <property type="term" value="C:cytosol"/>
    <property type="evidence" value="ECO:0007669"/>
    <property type="project" value="TreeGrafter"/>
</dbReference>
<dbReference type="GO" id="GO:0005524">
    <property type="term" value="F:ATP binding"/>
    <property type="evidence" value="ECO:0007669"/>
    <property type="project" value="UniProtKB-UniRule"/>
</dbReference>
<dbReference type="GO" id="GO:0004798">
    <property type="term" value="F:dTMP kinase activity"/>
    <property type="evidence" value="ECO:0007669"/>
    <property type="project" value="UniProtKB-UniRule"/>
</dbReference>
<dbReference type="GO" id="GO:0006233">
    <property type="term" value="P:dTDP biosynthetic process"/>
    <property type="evidence" value="ECO:0007669"/>
    <property type="project" value="InterPro"/>
</dbReference>
<dbReference type="GO" id="GO:0006235">
    <property type="term" value="P:dTTP biosynthetic process"/>
    <property type="evidence" value="ECO:0007669"/>
    <property type="project" value="UniProtKB-UniRule"/>
</dbReference>
<dbReference type="GO" id="GO:0006227">
    <property type="term" value="P:dUDP biosynthetic process"/>
    <property type="evidence" value="ECO:0007669"/>
    <property type="project" value="TreeGrafter"/>
</dbReference>
<dbReference type="CDD" id="cd01672">
    <property type="entry name" value="TMPK"/>
    <property type="match status" value="1"/>
</dbReference>
<dbReference type="FunFam" id="3.40.50.300:FF:000225">
    <property type="entry name" value="Thymidylate kinase"/>
    <property type="match status" value="1"/>
</dbReference>
<dbReference type="Gene3D" id="3.40.50.300">
    <property type="entry name" value="P-loop containing nucleotide triphosphate hydrolases"/>
    <property type="match status" value="1"/>
</dbReference>
<dbReference type="HAMAP" id="MF_00165">
    <property type="entry name" value="Thymidylate_kinase"/>
    <property type="match status" value="1"/>
</dbReference>
<dbReference type="InterPro" id="IPR027417">
    <property type="entry name" value="P-loop_NTPase"/>
</dbReference>
<dbReference type="InterPro" id="IPR039430">
    <property type="entry name" value="Thymidylate_kin-like_dom"/>
</dbReference>
<dbReference type="InterPro" id="IPR018095">
    <property type="entry name" value="Thymidylate_kin_CS"/>
</dbReference>
<dbReference type="InterPro" id="IPR018094">
    <property type="entry name" value="Thymidylate_kinase"/>
</dbReference>
<dbReference type="NCBIfam" id="TIGR00041">
    <property type="entry name" value="DTMP_kinase"/>
    <property type="match status" value="1"/>
</dbReference>
<dbReference type="PANTHER" id="PTHR10344">
    <property type="entry name" value="THYMIDYLATE KINASE"/>
    <property type="match status" value="1"/>
</dbReference>
<dbReference type="PANTHER" id="PTHR10344:SF4">
    <property type="entry name" value="UMP-CMP KINASE 2, MITOCHONDRIAL"/>
    <property type="match status" value="1"/>
</dbReference>
<dbReference type="Pfam" id="PF02223">
    <property type="entry name" value="Thymidylate_kin"/>
    <property type="match status" value="1"/>
</dbReference>
<dbReference type="SUPFAM" id="SSF52540">
    <property type="entry name" value="P-loop containing nucleoside triphosphate hydrolases"/>
    <property type="match status" value="1"/>
</dbReference>
<dbReference type="PROSITE" id="PS01331">
    <property type="entry name" value="THYMIDYLATE_KINASE"/>
    <property type="match status" value="1"/>
</dbReference>
<keyword id="KW-0067">ATP-binding</keyword>
<keyword id="KW-0418">Kinase</keyword>
<keyword id="KW-0545">Nucleotide biosynthesis</keyword>
<keyword id="KW-0547">Nucleotide-binding</keyword>
<keyword id="KW-1185">Reference proteome</keyword>
<keyword id="KW-0808">Transferase</keyword>
<comment type="function">
    <text evidence="1">Phosphorylation of dTMP to form dTDP in both de novo and salvage pathways of dTTP synthesis.</text>
</comment>
<comment type="catalytic activity">
    <reaction evidence="1">
        <text>dTMP + ATP = dTDP + ADP</text>
        <dbReference type="Rhea" id="RHEA:13517"/>
        <dbReference type="ChEBI" id="CHEBI:30616"/>
        <dbReference type="ChEBI" id="CHEBI:58369"/>
        <dbReference type="ChEBI" id="CHEBI:63528"/>
        <dbReference type="ChEBI" id="CHEBI:456216"/>
        <dbReference type="EC" id="2.7.4.9"/>
    </reaction>
</comment>
<comment type="similarity">
    <text evidence="1">Belongs to the thymidylate kinase family.</text>
</comment>
<reference key="1">
    <citation type="journal article" date="2006" name="Nat. Biotechnol.">
        <title>The genome and transcriptomes of the anti-tumor agent Clostridium novyi-NT.</title>
        <authorList>
            <person name="Bettegowda C."/>
            <person name="Huang X."/>
            <person name="Lin J."/>
            <person name="Cheong I."/>
            <person name="Kohli M."/>
            <person name="Szabo S.A."/>
            <person name="Zhang X."/>
            <person name="Diaz L.A. Jr."/>
            <person name="Velculescu V.E."/>
            <person name="Parmigiani G."/>
            <person name="Kinzler K.W."/>
            <person name="Vogelstein B."/>
            <person name="Zhou S."/>
        </authorList>
    </citation>
    <scope>NUCLEOTIDE SEQUENCE [LARGE SCALE GENOMIC DNA]</scope>
    <source>
        <strain>NT</strain>
    </source>
</reference>
<sequence length="205" mass="23370">MNKGAFITLEGPEGSGKTTIVKMIEKYLSENNIEYISTREPGGINISEQIRDVILNKDNVAMDARTEALLYVASRRQHLAERVIPAIKEGKVVICDRFIDSSLAYQGYARGIGIDEVMAINEFAIDGYMPDLTLYLDIEPEVGLKRISKNNEREVNRLDLEALDFHKKVREGYFKLLEKYPNRIKKINANQPVDKVFEEVKGFLK</sequence>
<gene>
    <name evidence="1" type="primary">tmk</name>
    <name type="ordered locus">NT01CX_0761</name>
</gene>
<organism>
    <name type="scientific">Clostridium novyi (strain NT)</name>
    <dbReference type="NCBI Taxonomy" id="386415"/>
    <lineage>
        <taxon>Bacteria</taxon>
        <taxon>Bacillati</taxon>
        <taxon>Bacillota</taxon>
        <taxon>Clostridia</taxon>
        <taxon>Eubacteriales</taxon>
        <taxon>Clostridiaceae</taxon>
        <taxon>Clostridium</taxon>
    </lineage>
</organism>
<proteinExistence type="inferred from homology"/>
<name>KTHY_CLONN</name>
<protein>
    <recommendedName>
        <fullName evidence="1">Thymidylate kinase</fullName>
        <ecNumber evidence="1">2.7.4.9</ecNumber>
    </recommendedName>
    <alternativeName>
        <fullName evidence="1">dTMP kinase</fullName>
    </alternativeName>
</protein>
<feature type="chain" id="PRO_1000071554" description="Thymidylate kinase">
    <location>
        <begin position="1"/>
        <end position="205"/>
    </location>
</feature>
<feature type="binding site" evidence="1">
    <location>
        <begin position="11"/>
        <end position="18"/>
    </location>
    <ligand>
        <name>ATP</name>
        <dbReference type="ChEBI" id="CHEBI:30616"/>
    </ligand>
</feature>
<accession>A0Q3M5</accession>
<evidence type="ECO:0000255" key="1">
    <source>
        <dbReference type="HAMAP-Rule" id="MF_00165"/>
    </source>
</evidence>